<organism>
    <name type="scientific">Syntrophus aciditrophicus (strain SB)</name>
    <dbReference type="NCBI Taxonomy" id="56780"/>
    <lineage>
        <taxon>Bacteria</taxon>
        <taxon>Pseudomonadati</taxon>
        <taxon>Thermodesulfobacteriota</taxon>
        <taxon>Syntrophia</taxon>
        <taxon>Syntrophales</taxon>
        <taxon>Syntrophaceae</taxon>
        <taxon>Syntrophus</taxon>
    </lineage>
</organism>
<reference key="1">
    <citation type="journal article" date="2007" name="Proc. Natl. Acad. Sci. U.S.A.">
        <title>The genome of Syntrophus aciditrophicus: life at the thermodynamic limit of microbial growth.</title>
        <authorList>
            <person name="McInerney M.J."/>
            <person name="Rohlin L."/>
            <person name="Mouttaki H."/>
            <person name="Kim U."/>
            <person name="Krupp R.S."/>
            <person name="Rios-Hernandez L."/>
            <person name="Sieber J."/>
            <person name="Struchtemeyer C.G."/>
            <person name="Bhattacharyya A."/>
            <person name="Campbell J.W."/>
            <person name="Gunsalus R.P."/>
        </authorList>
    </citation>
    <scope>NUCLEOTIDE SEQUENCE [LARGE SCALE GENOMIC DNA]</scope>
    <source>
        <strain>SB</strain>
    </source>
</reference>
<keyword id="KW-0963">Cytoplasm</keyword>
<keyword id="KW-0255">Endonuclease</keyword>
<keyword id="KW-0378">Hydrolase</keyword>
<keyword id="KW-0464">Manganese</keyword>
<keyword id="KW-0479">Metal-binding</keyword>
<keyword id="KW-0540">Nuclease</keyword>
<keyword id="KW-1185">Reference proteome</keyword>
<accession>Q2LVU5</accession>
<sequence length="212" mass="23724">MIGMDHFEREAYEDGYRVIAGVDEAGRGPLAGPVVAAAVILPHGYSHPEITDSKKLSAGKREKLYEVIKRDALAIGVGVVESPVIDQVNILRATLRAMAEAVDDLSIRPDFLLVDGLHRIFLNISQKTIVKGDTLSVSIASASIIAKVSRDRIMEIYHRQFPQYNFLKNKGYGTREHREAIQNFGFCKIHRRSFKVKSTKPQSLQTVNLFDF</sequence>
<protein>
    <recommendedName>
        <fullName evidence="1">Ribonuclease HII</fullName>
        <shortName evidence="1">RNase HII</shortName>
        <ecNumber evidence="1">3.1.26.4</ecNumber>
    </recommendedName>
</protein>
<proteinExistence type="inferred from homology"/>
<evidence type="ECO:0000255" key="1">
    <source>
        <dbReference type="HAMAP-Rule" id="MF_00052"/>
    </source>
</evidence>
<evidence type="ECO:0000255" key="2">
    <source>
        <dbReference type="PROSITE-ProRule" id="PRU01319"/>
    </source>
</evidence>
<name>RNH2_SYNAS</name>
<gene>
    <name evidence="1" type="primary">rnhB</name>
    <name type="ordered locus">SYNAS_23230</name>
    <name type="ORF">SYN_00771</name>
</gene>
<dbReference type="EC" id="3.1.26.4" evidence="1"/>
<dbReference type="EMBL" id="CP000252">
    <property type="protein sequence ID" value="ABC78202.1"/>
    <property type="molecule type" value="Genomic_DNA"/>
</dbReference>
<dbReference type="SMR" id="Q2LVU5"/>
<dbReference type="FunCoup" id="Q2LVU5">
    <property type="interactions" value="303"/>
</dbReference>
<dbReference type="STRING" id="56780.SYN_00771"/>
<dbReference type="KEGG" id="sat:SYN_00771"/>
<dbReference type="eggNOG" id="COG0164">
    <property type="taxonomic scope" value="Bacteria"/>
</dbReference>
<dbReference type="HOGENOM" id="CLU_036532_2_1_7"/>
<dbReference type="InParanoid" id="Q2LVU5"/>
<dbReference type="OrthoDB" id="9803420at2"/>
<dbReference type="Proteomes" id="UP000001933">
    <property type="component" value="Chromosome"/>
</dbReference>
<dbReference type="GO" id="GO:0005737">
    <property type="term" value="C:cytoplasm"/>
    <property type="evidence" value="ECO:0007669"/>
    <property type="project" value="UniProtKB-SubCell"/>
</dbReference>
<dbReference type="GO" id="GO:0032299">
    <property type="term" value="C:ribonuclease H2 complex"/>
    <property type="evidence" value="ECO:0007669"/>
    <property type="project" value="TreeGrafter"/>
</dbReference>
<dbReference type="GO" id="GO:0030145">
    <property type="term" value="F:manganese ion binding"/>
    <property type="evidence" value="ECO:0007669"/>
    <property type="project" value="UniProtKB-UniRule"/>
</dbReference>
<dbReference type="GO" id="GO:0003723">
    <property type="term" value="F:RNA binding"/>
    <property type="evidence" value="ECO:0007669"/>
    <property type="project" value="InterPro"/>
</dbReference>
<dbReference type="GO" id="GO:0004523">
    <property type="term" value="F:RNA-DNA hybrid ribonuclease activity"/>
    <property type="evidence" value="ECO:0007669"/>
    <property type="project" value="UniProtKB-UniRule"/>
</dbReference>
<dbReference type="GO" id="GO:0043137">
    <property type="term" value="P:DNA replication, removal of RNA primer"/>
    <property type="evidence" value="ECO:0007669"/>
    <property type="project" value="TreeGrafter"/>
</dbReference>
<dbReference type="GO" id="GO:0006298">
    <property type="term" value="P:mismatch repair"/>
    <property type="evidence" value="ECO:0007669"/>
    <property type="project" value="TreeGrafter"/>
</dbReference>
<dbReference type="CDD" id="cd07182">
    <property type="entry name" value="RNase_HII_bacteria_HII_like"/>
    <property type="match status" value="1"/>
</dbReference>
<dbReference type="FunFam" id="3.30.420.10:FF:000006">
    <property type="entry name" value="Ribonuclease HII"/>
    <property type="match status" value="1"/>
</dbReference>
<dbReference type="Gene3D" id="3.30.420.10">
    <property type="entry name" value="Ribonuclease H-like superfamily/Ribonuclease H"/>
    <property type="match status" value="1"/>
</dbReference>
<dbReference type="HAMAP" id="MF_00052_B">
    <property type="entry name" value="RNase_HII_B"/>
    <property type="match status" value="1"/>
</dbReference>
<dbReference type="InterPro" id="IPR022898">
    <property type="entry name" value="RNase_HII"/>
</dbReference>
<dbReference type="InterPro" id="IPR001352">
    <property type="entry name" value="RNase_HII/HIII"/>
</dbReference>
<dbReference type="InterPro" id="IPR024567">
    <property type="entry name" value="RNase_HII/HIII_dom"/>
</dbReference>
<dbReference type="InterPro" id="IPR012337">
    <property type="entry name" value="RNaseH-like_sf"/>
</dbReference>
<dbReference type="InterPro" id="IPR036397">
    <property type="entry name" value="RNaseH_sf"/>
</dbReference>
<dbReference type="NCBIfam" id="NF000594">
    <property type="entry name" value="PRK00015.1-1"/>
    <property type="match status" value="1"/>
</dbReference>
<dbReference type="NCBIfam" id="NF000595">
    <property type="entry name" value="PRK00015.1-3"/>
    <property type="match status" value="1"/>
</dbReference>
<dbReference type="PANTHER" id="PTHR10954">
    <property type="entry name" value="RIBONUCLEASE H2 SUBUNIT A"/>
    <property type="match status" value="1"/>
</dbReference>
<dbReference type="PANTHER" id="PTHR10954:SF18">
    <property type="entry name" value="RIBONUCLEASE HII"/>
    <property type="match status" value="1"/>
</dbReference>
<dbReference type="Pfam" id="PF01351">
    <property type="entry name" value="RNase_HII"/>
    <property type="match status" value="1"/>
</dbReference>
<dbReference type="SUPFAM" id="SSF53098">
    <property type="entry name" value="Ribonuclease H-like"/>
    <property type="match status" value="1"/>
</dbReference>
<dbReference type="PROSITE" id="PS51975">
    <property type="entry name" value="RNASE_H_2"/>
    <property type="match status" value="1"/>
</dbReference>
<feature type="chain" id="PRO_0000235784" description="Ribonuclease HII">
    <location>
        <begin position="1"/>
        <end position="212"/>
    </location>
</feature>
<feature type="domain" description="RNase H type-2" evidence="2">
    <location>
        <begin position="17"/>
        <end position="206"/>
    </location>
</feature>
<feature type="binding site" evidence="1">
    <location>
        <position position="23"/>
    </location>
    <ligand>
        <name>a divalent metal cation</name>
        <dbReference type="ChEBI" id="CHEBI:60240"/>
    </ligand>
</feature>
<feature type="binding site" evidence="1">
    <location>
        <position position="24"/>
    </location>
    <ligand>
        <name>a divalent metal cation</name>
        <dbReference type="ChEBI" id="CHEBI:60240"/>
    </ligand>
</feature>
<feature type="binding site" evidence="1">
    <location>
        <position position="115"/>
    </location>
    <ligand>
        <name>a divalent metal cation</name>
        <dbReference type="ChEBI" id="CHEBI:60240"/>
    </ligand>
</feature>
<comment type="function">
    <text evidence="1">Endonuclease that specifically degrades the RNA of RNA-DNA hybrids.</text>
</comment>
<comment type="catalytic activity">
    <reaction evidence="1">
        <text>Endonucleolytic cleavage to 5'-phosphomonoester.</text>
        <dbReference type="EC" id="3.1.26.4"/>
    </reaction>
</comment>
<comment type="cofactor">
    <cofactor evidence="1">
        <name>Mn(2+)</name>
        <dbReference type="ChEBI" id="CHEBI:29035"/>
    </cofactor>
    <cofactor evidence="1">
        <name>Mg(2+)</name>
        <dbReference type="ChEBI" id="CHEBI:18420"/>
    </cofactor>
    <text evidence="1">Manganese or magnesium. Binds 1 divalent metal ion per monomer in the absence of substrate. May bind a second metal ion after substrate binding.</text>
</comment>
<comment type="subcellular location">
    <subcellularLocation>
        <location evidence="1">Cytoplasm</location>
    </subcellularLocation>
</comment>
<comment type="similarity">
    <text evidence="1">Belongs to the RNase HII family.</text>
</comment>